<proteinExistence type="inferred from homology"/>
<gene>
    <name evidence="1" type="primary">rpsN</name>
    <name type="ordered locus">YPN_3846</name>
    <name type="ORF">YP516_4369</name>
</gene>
<sequence>MAKQSMKAREVVRVKLANKYRAKREELKAIISGVNSSDEDRWDAVLKLQSLPRDSSPSRQRNRCNQTGRPHGFLRKFGLSRIKVRETAMRGEIPGLKKASW</sequence>
<keyword id="KW-0687">Ribonucleoprotein</keyword>
<keyword id="KW-0689">Ribosomal protein</keyword>
<keyword id="KW-0694">RNA-binding</keyword>
<keyword id="KW-0699">rRNA-binding</keyword>
<feature type="chain" id="PRO_1000128654" description="Small ribosomal subunit protein uS14">
    <location>
        <begin position="1"/>
        <end position="101"/>
    </location>
</feature>
<feature type="region of interest" description="Disordered" evidence="2">
    <location>
        <begin position="49"/>
        <end position="70"/>
    </location>
</feature>
<feature type="compositionally biased region" description="Polar residues" evidence="2">
    <location>
        <begin position="52"/>
        <end position="68"/>
    </location>
</feature>
<organism>
    <name type="scientific">Yersinia pestis bv. Antiqua (strain Nepal516)</name>
    <dbReference type="NCBI Taxonomy" id="377628"/>
    <lineage>
        <taxon>Bacteria</taxon>
        <taxon>Pseudomonadati</taxon>
        <taxon>Pseudomonadota</taxon>
        <taxon>Gammaproteobacteria</taxon>
        <taxon>Enterobacterales</taxon>
        <taxon>Yersiniaceae</taxon>
        <taxon>Yersinia</taxon>
    </lineage>
</organism>
<comment type="function">
    <text evidence="1">Binds 16S rRNA, required for the assembly of 30S particles and may also be responsible for determining the conformation of the 16S rRNA at the A site.</text>
</comment>
<comment type="subunit">
    <text evidence="1">Part of the 30S ribosomal subunit. Contacts proteins S3 and S10.</text>
</comment>
<comment type="similarity">
    <text evidence="1">Belongs to the universal ribosomal protein uS14 family.</text>
</comment>
<dbReference type="EMBL" id="CP000305">
    <property type="protein sequence ID" value="ABG20173.1"/>
    <property type="molecule type" value="Genomic_DNA"/>
</dbReference>
<dbReference type="EMBL" id="ACNQ01000019">
    <property type="protein sequence ID" value="EEO74761.1"/>
    <property type="molecule type" value="Genomic_DNA"/>
</dbReference>
<dbReference type="RefSeq" id="WP_002213330.1">
    <property type="nucleotide sequence ID" value="NZ_ACNQ01000019.1"/>
</dbReference>
<dbReference type="SMR" id="Q1CCV7"/>
<dbReference type="GeneID" id="96663183"/>
<dbReference type="KEGG" id="ypn:YPN_3846"/>
<dbReference type="HOGENOM" id="CLU_139869_0_1_6"/>
<dbReference type="Proteomes" id="UP000008936">
    <property type="component" value="Chromosome"/>
</dbReference>
<dbReference type="GO" id="GO:0005737">
    <property type="term" value="C:cytoplasm"/>
    <property type="evidence" value="ECO:0007669"/>
    <property type="project" value="UniProtKB-ARBA"/>
</dbReference>
<dbReference type="GO" id="GO:0015935">
    <property type="term" value="C:small ribosomal subunit"/>
    <property type="evidence" value="ECO:0007669"/>
    <property type="project" value="TreeGrafter"/>
</dbReference>
<dbReference type="GO" id="GO:0019843">
    <property type="term" value="F:rRNA binding"/>
    <property type="evidence" value="ECO:0007669"/>
    <property type="project" value="UniProtKB-UniRule"/>
</dbReference>
<dbReference type="GO" id="GO:0003735">
    <property type="term" value="F:structural constituent of ribosome"/>
    <property type="evidence" value="ECO:0007669"/>
    <property type="project" value="InterPro"/>
</dbReference>
<dbReference type="GO" id="GO:0006412">
    <property type="term" value="P:translation"/>
    <property type="evidence" value="ECO:0007669"/>
    <property type="project" value="UniProtKB-UniRule"/>
</dbReference>
<dbReference type="FunFam" id="1.10.287.1480:FF:000001">
    <property type="entry name" value="30S ribosomal protein S14"/>
    <property type="match status" value="1"/>
</dbReference>
<dbReference type="Gene3D" id="1.10.287.1480">
    <property type="match status" value="1"/>
</dbReference>
<dbReference type="HAMAP" id="MF_00537">
    <property type="entry name" value="Ribosomal_uS14_1"/>
    <property type="match status" value="1"/>
</dbReference>
<dbReference type="InterPro" id="IPR001209">
    <property type="entry name" value="Ribosomal_uS14"/>
</dbReference>
<dbReference type="InterPro" id="IPR023036">
    <property type="entry name" value="Ribosomal_uS14_bac/plastid"/>
</dbReference>
<dbReference type="InterPro" id="IPR018271">
    <property type="entry name" value="Ribosomal_uS14_CS"/>
</dbReference>
<dbReference type="NCBIfam" id="NF006477">
    <property type="entry name" value="PRK08881.1"/>
    <property type="match status" value="1"/>
</dbReference>
<dbReference type="PANTHER" id="PTHR19836">
    <property type="entry name" value="30S RIBOSOMAL PROTEIN S14"/>
    <property type="match status" value="1"/>
</dbReference>
<dbReference type="PANTHER" id="PTHR19836:SF19">
    <property type="entry name" value="SMALL RIBOSOMAL SUBUNIT PROTEIN US14M"/>
    <property type="match status" value="1"/>
</dbReference>
<dbReference type="Pfam" id="PF00253">
    <property type="entry name" value="Ribosomal_S14"/>
    <property type="match status" value="1"/>
</dbReference>
<dbReference type="SUPFAM" id="SSF57716">
    <property type="entry name" value="Glucocorticoid receptor-like (DNA-binding domain)"/>
    <property type="match status" value="1"/>
</dbReference>
<dbReference type="PROSITE" id="PS00527">
    <property type="entry name" value="RIBOSOMAL_S14"/>
    <property type="match status" value="1"/>
</dbReference>
<name>RS14_YERPN</name>
<accession>Q1CCV7</accession>
<accession>D1Q2K8</accession>
<evidence type="ECO:0000255" key="1">
    <source>
        <dbReference type="HAMAP-Rule" id="MF_00537"/>
    </source>
</evidence>
<evidence type="ECO:0000256" key="2">
    <source>
        <dbReference type="SAM" id="MobiDB-lite"/>
    </source>
</evidence>
<evidence type="ECO:0000305" key="3"/>
<reference key="1">
    <citation type="journal article" date="2006" name="J. Bacteriol.">
        <title>Complete genome sequence of Yersinia pestis strains Antiqua and Nepal516: evidence of gene reduction in an emerging pathogen.</title>
        <authorList>
            <person name="Chain P.S.G."/>
            <person name="Hu P."/>
            <person name="Malfatti S.A."/>
            <person name="Radnedge L."/>
            <person name="Larimer F."/>
            <person name="Vergez L.M."/>
            <person name="Worsham P."/>
            <person name="Chu M.C."/>
            <person name="Andersen G.L."/>
        </authorList>
    </citation>
    <scope>NUCLEOTIDE SEQUENCE [LARGE SCALE GENOMIC DNA]</scope>
    <source>
        <strain>Nepal516</strain>
    </source>
</reference>
<reference key="2">
    <citation type="submission" date="2009-04" db="EMBL/GenBank/DDBJ databases">
        <title>Yersinia pestis Nepal516A whole genome shotgun sequencing project.</title>
        <authorList>
            <person name="Plunkett G. III"/>
            <person name="Anderson B.D."/>
            <person name="Baumler D.J."/>
            <person name="Burland V."/>
            <person name="Cabot E.L."/>
            <person name="Glasner J.D."/>
            <person name="Mau B."/>
            <person name="Neeno-Eckwall E."/>
            <person name="Perna N.T."/>
            <person name="Munk A.C."/>
            <person name="Tapia R."/>
            <person name="Green L.D."/>
            <person name="Rogers Y.C."/>
            <person name="Detter J.C."/>
            <person name="Bruce D.C."/>
            <person name="Brettin T.S."/>
        </authorList>
    </citation>
    <scope>NUCLEOTIDE SEQUENCE [LARGE SCALE GENOMIC DNA]</scope>
    <source>
        <strain>Nepal516</strain>
    </source>
</reference>
<protein>
    <recommendedName>
        <fullName evidence="1">Small ribosomal subunit protein uS14</fullName>
    </recommendedName>
    <alternativeName>
        <fullName evidence="3">30S ribosomal protein S14</fullName>
    </alternativeName>
</protein>